<keyword id="KW-0414">Isoprene biosynthesis</keyword>
<keyword id="KW-0460">Magnesium</keyword>
<keyword id="KW-0479">Metal-binding</keyword>
<keyword id="KW-1185">Reference proteome</keyword>
<keyword id="KW-0784">Thiamine biosynthesis</keyword>
<keyword id="KW-0786">Thiamine pyrophosphate</keyword>
<keyword id="KW-0808">Transferase</keyword>
<evidence type="ECO:0000255" key="1">
    <source>
        <dbReference type="HAMAP-Rule" id="MF_00315"/>
    </source>
</evidence>
<protein>
    <recommendedName>
        <fullName evidence="1">1-deoxy-D-xylulose-5-phosphate synthase</fullName>
        <ecNumber evidence="1">2.2.1.7</ecNumber>
    </recommendedName>
    <alternativeName>
        <fullName evidence="1">1-deoxyxylulose-5-phosphate synthase</fullName>
        <shortName evidence="1">DXP synthase</shortName>
        <shortName evidence="1">DXPS</shortName>
    </alternativeName>
</protein>
<dbReference type="EC" id="2.2.1.7" evidence="1"/>
<dbReference type="EMBL" id="CP000113">
    <property type="protein sequence ID" value="ABF90170.1"/>
    <property type="molecule type" value="Genomic_DNA"/>
</dbReference>
<dbReference type="RefSeq" id="WP_011554635.1">
    <property type="nucleotide sequence ID" value="NC_008095.1"/>
</dbReference>
<dbReference type="SMR" id="Q1D3G4"/>
<dbReference type="STRING" id="246197.MXAN_4643"/>
<dbReference type="EnsemblBacteria" id="ABF90170">
    <property type="protein sequence ID" value="ABF90170"/>
    <property type="gene ID" value="MXAN_4643"/>
</dbReference>
<dbReference type="GeneID" id="41361943"/>
<dbReference type="KEGG" id="mxa:MXAN_4643"/>
<dbReference type="eggNOG" id="COG1154">
    <property type="taxonomic scope" value="Bacteria"/>
</dbReference>
<dbReference type="HOGENOM" id="CLU_009227_1_4_7"/>
<dbReference type="OrthoDB" id="9803371at2"/>
<dbReference type="UniPathway" id="UPA00064">
    <property type="reaction ID" value="UER00091"/>
</dbReference>
<dbReference type="Proteomes" id="UP000002402">
    <property type="component" value="Chromosome"/>
</dbReference>
<dbReference type="GO" id="GO:0005829">
    <property type="term" value="C:cytosol"/>
    <property type="evidence" value="ECO:0007669"/>
    <property type="project" value="TreeGrafter"/>
</dbReference>
<dbReference type="GO" id="GO:0008661">
    <property type="term" value="F:1-deoxy-D-xylulose-5-phosphate synthase activity"/>
    <property type="evidence" value="ECO:0007669"/>
    <property type="project" value="UniProtKB-UniRule"/>
</dbReference>
<dbReference type="GO" id="GO:0000287">
    <property type="term" value="F:magnesium ion binding"/>
    <property type="evidence" value="ECO:0007669"/>
    <property type="project" value="UniProtKB-UniRule"/>
</dbReference>
<dbReference type="GO" id="GO:0030976">
    <property type="term" value="F:thiamine pyrophosphate binding"/>
    <property type="evidence" value="ECO:0007669"/>
    <property type="project" value="UniProtKB-UniRule"/>
</dbReference>
<dbReference type="GO" id="GO:0052865">
    <property type="term" value="P:1-deoxy-D-xylulose 5-phosphate biosynthetic process"/>
    <property type="evidence" value="ECO:0007669"/>
    <property type="project" value="UniProtKB-UniPathway"/>
</dbReference>
<dbReference type="GO" id="GO:0019288">
    <property type="term" value="P:isopentenyl diphosphate biosynthetic process, methylerythritol 4-phosphate pathway"/>
    <property type="evidence" value="ECO:0007669"/>
    <property type="project" value="TreeGrafter"/>
</dbReference>
<dbReference type="GO" id="GO:0016114">
    <property type="term" value="P:terpenoid biosynthetic process"/>
    <property type="evidence" value="ECO:0007669"/>
    <property type="project" value="UniProtKB-UniRule"/>
</dbReference>
<dbReference type="GO" id="GO:0009228">
    <property type="term" value="P:thiamine biosynthetic process"/>
    <property type="evidence" value="ECO:0007669"/>
    <property type="project" value="UniProtKB-UniRule"/>
</dbReference>
<dbReference type="CDD" id="cd02007">
    <property type="entry name" value="TPP_DXS"/>
    <property type="match status" value="1"/>
</dbReference>
<dbReference type="CDD" id="cd07033">
    <property type="entry name" value="TPP_PYR_DXS_TK_like"/>
    <property type="match status" value="1"/>
</dbReference>
<dbReference type="FunFam" id="3.40.50.970:FF:000010">
    <property type="entry name" value="1-deoxy-D-xylulose-5-phosphate synthase"/>
    <property type="match status" value="1"/>
</dbReference>
<dbReference type="Gene3D" id="3.40.50.920">
    <property type="match status" value="1"/>
</dbReference>
<dbReference type="Gene3D" id="3.40.50.970">
    <property type="match status" value="2"/>
</dbReference>
<dbReference type="HAMAP" id="MF_00315">
    <property type="entry name" value="DXP_synth"/>
    <property type="match status" value="1"/>
</dbReference>
<dbReference type="InterPro" id="IPR005477">
    <property type="entry name" value="Dxylulose-5-P_synthase"/>
</dbReference>
<dbReference type="InterPro" id="IPR029061">
    <property type="entry name" value="THDP-binding"/>
</dbReference>
<dbReference type="InterPro" id="IPR009014">
    <property type="entry name" value="Transketo_C/PFOR_II"/>
</dbReference>
<dbReference type="InterPro" id="IPR005475">
    <property type="entry name" value="Transketolase-like_Pyr-bd"/>
</dbReference>
<dbReference type="InterPro" id="IPR033248">
    <property type="entry name" value="Transketolase_C"/>
</dbReference>
<dbReference type="InterPro" id="IPR049557">
    <property type="entry name" value="Transketolase_CS"/>
</dbReference>
<dbReference type="NCBIfam" id="NF003933">
    <property type="entry name" value="PRK05444.2-2"/>
    <property type="match status" value="1"/>
</dbReference>
<dbReference type="PANTHER" id="PTHR43322">
    <property type="entry name" value="1-D-DEOXYXYLULOSE 5-PHOSPHATE SYNTHASE-RELATED"/>
    <property type="match status" value="1"/>
</dbReference>
<dbReference type="PANTHER" id="PTHR43322:SF5">
    <property type="entry name" value="1-DEOXY-D-XYLULOSE-5-PHOSPHATE SYNTHASE, CHLOROPLASTIC"/>
    <property type="match status" value="1"/>
</dbReference>
<dbReference type="Pfam" id="PF13292">
    <property type="entry name" value="DXP_synthase_N"/>
    <property type="match status" value="2"/>
</dbReference>
<dbReference type="Pfam" id="PF02779">
    <property type="entry name" value="Transket_pyr"/>
    <property type="match status" value="1"/>
</dbReference>
<dbReference type="Pfam" id="PF02780">
    <property type="entry name" value="Transketolase_C"/>
    <property type="match status" value="1"/>
</dbReference>
<dbReference type="SMART" id="SM00861">
    <property type="entry name" value="Transket_pyr"/>
    <property type="match status" value="1"/>
</dbReference>
<dbReference type="SUPFAM" id="SSF52518">
    <property type="entry name" value="Thiamin diphosphate-binding fold (THDP-binding)"/>
    <property type="match status" value="1"/>
</dbReference>
<dbReference type="SUPFAM" id="SSF52922">
    <property type="entry name" value="TK C-terminal domain-like"/>
    <property type="match status" value="1"/>
</dbReference>
<dbReference type="PROSITE" id="PS00801">
    <property type="entry name" value="TRANSKETOLASE_1"/>
    <property type="match status" value="1"/>
</dbReference>
<sequence>MSELLSRIGSPSDVRALPEEALPLLCQELREDIISICGRVGGHLGASLGAVELIVALHRVFHSPQDALLFDVGHQTYAHKLLTGRRDRMHTLRHAGGIAPFLDPRESPHDALLAGHSCTAVSAALGVLEGRRQQGHRGHVVAVLGDGGLTGGLTFEGLNNAGGSSLPLVVVLNDNQMSISANVGAIPALLRTREARDFFEGLGFTYLGPVDGHDLPALIRALREARASSRPVVVHALTLKGKGFPPAEADTQTRGHAMGPYEWRDGKLVRSRGGQRTFSEAFAAVLEDAMARDPRVVAVTPAMLEGSALNALKARFPDRVHDVGIAEQHAVTFSAGLASAGARPVCCIYSTFLQRAYDQIIHDVCLPGLPVVFAVDRAGLVGADGATHQGTYDVASLRPLPDLHLWSPMVGEDLAPMLDTALAAPHASVIRFPRGTLPPLPEGLGAGEAPLRGARWLLRAEQPRLTLVTLGPLGIAALEAARGEPGWSVLDARCASPLDEAALLEAGRSGHVVVAEEGTTRGGLGSAVLELFAAHGLMARVRLMGMPDAFVPHGDARVQRAEQGLDAEGLRRAGLALLAGGGR</sequence>
<accession>Q1D3G4</accession>
<comment type="function">
    <text evidence="1">Catalyzes the acyloin condensation reaction between C atoms 2 and 3 of pyruvate and glyceraldehyde 3-phosphate to yield 1-deoxy-D-xylulose-5-phosphate (DXP).</text>
</comment>
<comment type="catalytic activity">
    <reaction evidence="1">
        <text>D-glyceraldehyde 3-phosphate + pyruvate + H(+) = 1-deoxy-D-xylulose 5-phosphate + CO2</text>
        <dbReference type="Rhea" id="RHEA:12605"/>
        <dbReference type="ChEBI" id="CHEBI:15361"/>
        <dbReference type="ChEBI" id="CHEBI:15378"/>
        <dbReference type="ChEBI" id="CHEBI:16526"/>
        <dbReference type="ChEBI" id="CHEBI:57792"/>
        <dbReference type="ChEBI" id="CHEBI:59776"/>
        <dbReference type="EC" id="2.2.1.7"/>
    </reaction>
</comment>
<comment type="cofactor">
    <cofactor evidence="1">
        <name>Mg(2+)</name>
        <dbReference type="ChEBI" id="CHEBI:18420"/>
    </cofactor>
    <text evidence="1">Binds 1 Mg(2+) ion per subunit.</text>
</comment>
<comment type="cofactor">
    <cofactor evidence="1">
        <name>thiamine diphosphate</name>
        <dbReference type="ChEBI" id="CHEBI:58937"/>
    </cofactor>
    <text evidence="1">Binds 1 thiamine pyrophosphate per subunit.</text>
</comment>
<comment type="pathway">
    <text evidence="1">Metabolic intermediate biosynthesis; 1-deoxy-D-xylulose 5-phosphate biosynthesis; 1-deoxy-D-xylulose 5-phosphate from D-glyceraldehyde 3-phosphate and pyruvate: step 1/1.</text>
</comment>
<comment type="subunit">
    <text evidence="1">Homodimer.</text>
</comment>
<comment type="similarity">
    <text evidence="1">Belongs to the transketolase family. DXPS subfamily.</text>
</comment>
<reference key="1">
    <citation type="journal article" date="2006" name="Proc. Natl. Acad. Sci. U.S.A.">
        <title>Evolution of sensory complexity recorded in a myxobacterial genome.</title>
        <authorList>
            <person name="Goldman B.S."/>
            <person name="Nierman W.C."/>
            <person name="Kaiser D."/>
            <person name="Slater S.C."/>
            <person name="Durkin A.S."/>
            <person name="Eisen J.A."/>
            <person name="Ronning C.M."/>
            <person name="Barbazuk W.B."/>
            <person name="Blanchard M."/>
            <person name="Field C."/>
            <person name="Halling C."/>
            <person name="Hinkle G."/>
            <person name="Iartchuk O."/>
            <person name="Kim H.S."/>
            <person name="Mackenzie C."/>
            <person name="Madupu R."/>
            <person name="Miller N."/>
            <person name="Shvartsbeyn A."/>
            <person name="Sullivan S.A."/>
            <person name="Vaudin M."/>
            <person name="Wiegand R."/>
            <person name="Kaplan H.B."/>
        </authorList>
    </citation>
    <scope>NUCLEOTIDE SEQUENCE [LARGE SCALE GENOMIC DNA]</scope>
    <source>
        <strain>DK1622</strain>
    </source>
</reference>
<feature type="chain" id="PRO_0000256441" description="1-deoxy-D-xylulose-5-phosphate synthase">
    <location>
        <begin position="1"/>
        <end position="583"/>
    </location>
</feature>
<feature type="binding site" evidence="1">
    <location>
        <position position="74"/>
    </location>
    <ligand>
        <name>thiamine diphosphate</name>
        <dbReference type="ChEBI" id="CHEBI:58937"/>
    </ligand>
</feature>
<feature type="binding site" evidence="1">
    <location>
        <begin position="115"/>
        <end position="117"/>
    </location>
    <ligand>
        <name>thiamine diphosphate</name>
        <dbReference type="ChEBI" id="CHEBI:58937"/>
    </ligand>
</feature>
<feature type="binding site" evidence="1">
    <location>
        <position position="146"/>
    </location>
    <ligand>
        <name>Mg(2+)</name>
        <dbReference type="ChEBI" id="CHEBI:18420"/>
    </ligand>
</feature>
<feature type="binding site" evidence="1">
    <location>
        <begin position="147"/>
        <end position="148"/>
    </location>
    <ligand>
        <name>thiamine diphosphate</name>
        <dbReference type="ChEBI" id="CHEBI:58937"/>
    </ligand>
</feature>
<feature type="binding site" evidence="1">
    <location>
        <position position="175"/>
    </location>
    <ligand>
        <name>Mg(2+)</name>
        <dbReference type="ChEBI" id="CHEBI:18420"/>
    </ligand>
</feature>
<feature type="binding site" evidence="1">
    <location>
        <position position="175"/>
    </location>
    <ligand>
        <name>thiamine diphosphate</name>
        <dbReference type="ChEBI" id="CHEBI:58937"/>
    </ligand>
</feature>
<feature type="binding site" evidence="1">
    <location>
        <position position="244"/>
    </location>
    <ligand>
        <name>thiamine diphosphate</name>
        <dbReference type="ChEBI" id="CHEBI:58937"/>
    </ligand>
</feature>
<feature type="binding site" evidence="1">
    <location>
        <position position="327"/>
    </location>
    <ligand>
        <name>thiamine diphosphate</name>
        <dbReference type="ChEBI" id="CHEBI:58937"/>
    </ligand>
</feature>
<gene>
    <name evidence="1" type="primary">dxs</name>
    <name type="ordered locus">MXAN_4643</name>
</gene>
<name>DXS_MYXXD</name>
<proteinExistence type="inferred from homology"/>
<organism>
    <name type="scientific">Myxococcus xanthus (strain DK1622)</name>
    <dbReference type="NCBI Taxonomy" id="246197"/>
    <lineage>
        <taxon>Bacteria</taxon>
        <taxon>Pseudomonadati</taxon>
        <taxon>Myxococcota</taxon>
        <taxon>Myxococcia</taxon>
        <taxon>Myxococcales</taxon>
        <taxon>Cystobacterineae</taxon>
        <taxon>Myxococcaceae</taxon>
        <taxon>Myxococcus</taxon>
    </lineage>
</organism>